<keyword id="KW-0687">Ribonucleoprotein</keyword>
<keyword id="KW-0689">Ribosomal protein</keyword>
<accession>Q57J31</accession>
<name>RS10_SALCH</name>
<protein>
    <recommendedName>
        <fullName evidence="1">Small ribosomal subunit protein uS10</fullName>
    </recommendedName>
    <alternativeName>
        <fullName evidence="2">30S ribosomal protein S10</fullName>
    </alternativeName>
</protein>
<feature type="chain" id="PRO_0000237091" description="Small ribosomal subunit protein uS10">
    <location>
        <begin position="1"/>
        <end position="103"/>
    </location>
</feature>
<reference key="1">
    <citation type="journal article" date="2005" name="Nucleic Acids Res.">
        <title>The genome sequence of Salmonella enterica serovar Choleraesuis, a highly invasive and resistant zoonotic pathogen.</title>
        <authorList>
            <person name="Chiu C.-H."/>
            <person name="Tang P."/>
            <person name="Chu C."/>
            <person name="Hu S."/>
            <person name="Bao Q."/>
            <person name="Yu J."/>
            <person name="Chou Y.-Y."/>
            <person name="Wang H.-S."/>
            <person name="Lee Y.-S."/>
        </authorList>
    </citation>
    <scope>NUCLEOTIDE SEQUENCE [LARGE SCALE GENOMIC DNA]</scope>
    <source>
        <strain>SC-B67</strain>
    </source>
</reference>
<evidence type="ECO:0000255" key="1">
    <source>
        <dbReference type="HAMAP-Rule" id="MF_00508"/>
    </source>
</evidence>
<evidence type="ECO:0000305" key="2"/>
<sequence length="103" mass="11767">MQNQRIRIRLKAFDHRLIDQSTAEIVETAKRTGAQVRGPIPLPTRKERFTVLISPHVNKDARDQYEIRTHKRLVDIVEPTEKTVDALMRLDLAAGVDVQISLG</sequence>
<organism>
    <name type="scientific">Salmonella choleraesuis (strain SC-B67)</name>
    <dbReference type="NCBI Taxonomy" id="321314"/>
    <lineage>
        <taxon>Bacteria</taxon>
        <taxon>Pseudomonadati</taxon>
        <taxon>Pseudomonadota</taxon>
        <taxon>Gammaproteobacteria</taxon>
        <taxon>Enterobacterales</taxon>
        <taxon>Enterobacteriaceae</taxon>
        <taxon>Salmonella</taxon>
    </lineage>
</organism>
<proteinExistence type="inferred from homology"/>
<dbReference type="EMBL" id="AE017220">
    <property type="protein sequence ID" value="AAX67281.1"/>
    <property type="molecule type" value="Genomic_DNA"/>
</dbReference>
<dbReference type="RefSeq" id="WP_001181005.1">
    <property type="nucleotide sequence ID" value="NC_006905.1"/>
</dbReference>
<dbReference type="SMR" id="Q57J31"/>
<dbReference type="GeneID" id="98390443"/>
<dbReference type="KEGG" id="sec:SCH_3375"/>
<dbReference type="HOGENOM" id="CLU_122625_1_3_6"/>
<dbReference type="Proteomes" id="UP000000538">
    <property type="component" value="Chromosome"/>
</dbReference>
<dbReference type="GO" id="GO:1990904">
    <property type="term" value="C:ribonucleoprotein complex"/>
    <property type="evidence" value="ECO:0007669"/>
    <property type="project" value="UniProtKB-KW"/>
</dbReference>
<dbReference type="GO" id="GO:0005840">
    <property type="term" value="C:ribosome"/>
    <property type="evidence" value="ECO:0007669"/>
    <property type="project" value="UniProtKB-KW"/>
</dbReference>
<dbReference type="GO" id="GO:0003735">
    <property type="term" value="F:structural constituent of ribosome"/>
    <property type="evidence" value="ECO:0007669"/>
    <property type="project" value="InterPro"/>
</dbReference>
<dbReference type="GO" id="GO:0000049">
    <property type="term" value="F:tRNA binding"/>
    <property type="evidence" value="ECO:0007669"/>
    <property type="project" value="UniProtKB-UniRule"/>
</dbReference>
<dbReference type="GO" id="GO:0006412">
    <property type="term" value="P:translation"/>
    <property type="evidence" value="ECO:0007669"/>
    <property type="project" value="UniProtKB-UniRule"/>
</dbReference>
<dbReference type="FunFam" id="3.30.70.600:FF:000001">
    <property type="entry name" value="30S ribosomal protein S10"/>
    <property type="match status" value="1"/>
</dbReference>
<dbReference type="Gene3D" id="3.30.70.600">
    <property type="entry name" value="Ribosomal protein S10 domain"/>
    <property type="match status" value="1"/>
</dbReference>
<dbReference type="HAMAP" id="MF_00508">
    <property type="entry name" value="Ribosomal_uS10"/>
    <property type="match status" value="1"/>
</dbReference>
<dbReference type="InterPro" id="IPR001848">
    <property type="entry name" value="Ribosomal_uS10"/>
</dbReference>
<dbReference type="InterPro" id="IPR018268">
    <property type="entry name" value="Ribosomal_uS10_CS"/>
</dbReference>
<dbReference type="InterPro" id="IPR027486">
    <property type="entry name" value="Ribosomal_uS10_dom"/>
</dbReference>
<dbReference type="InterPro" id="IPR036838">
    <property type="entry name" value="Ribosomal_uS10_dom_sf"/>
</dbReference>
<dbReference type="NCBIfam" id="NF001861">
    <property type="entry name" value="PRK00596.1"/>
    <property type="match status" value="1"/>
</dbReference>
<dbReference type="NCBIfam" id="TIGR01049">
    <property type="entry name" value="rpsJ_bact"/>
    <property type="match status" value="1"/>
</dbReference>
<dbReference type="PANTHER" id="PTHR11700">
    <property type="entry name" value="30S RIBOSOMAL PROTEIN S10 FAMILY MEMBER"/>
    <property type="match status" value="1"/>
</dbReference>
<dbReference type="Pfam" id="PF00338">
    <property type="entry name" value="Ribosomal_S10"/>
    <property type="match status" value="1"/>
</dbReference>
<dbReference type="PRINTS" id="PR00971">
    <property type="entry name" value="RIBOSOMALS10"/>
</dbReference>
<dbReference type="SMART" id="SM01403">
    <property type="entry name" value="Ribosomal_S10"/>
    <property type="match status" value="1"/>
</dbReference>
<dbReference type="SUPFAM" id="SSF54999">
    <property type="entry name" value="Ribosomal protein S10"/>
    <property type="match status" value="1"/>
</dbReference>
<dbReference type="PROSITE" id="PS00361">
    <property type="entry name" value="RIBOSOMAL_S10"/>
    <property type="match status" value="1"/>
</dbReference>
<gene>
    <name evidence="1" type="primary">rpsJ</name>
    <name type="ordered locus">SCH_3375</name>
</gene>
<comment type="function">
    <text evidence="1">Involved in the binding of tRNA to the ribosomes.</text>
</comment>
<comment type="subunit">
    <text evidence="1">Part of the 30S ribosomal subunit.</text>
</comment>
<comment type="similarity">
    <text evidence="1">Belongs to the universal ribosomal protein uS10 family.</text>
</comment>